<organism>
    <name type="scientific">Rhizobium meliloti (strain 1021)</name>
    <name type="common">Ensifer meliloti</name>
    <name type="synonym">Sinorhizobium meliloti</name>
    <dbReference type="NCBI Taxonomy" id="266834"/>
    <lineage>
        <taxon>Bacteria</taxon>
        <taxon>Pseudomonadati</taxon>
        <taxon>Pseudomonadota</taxon>
        <taxon>Alphaproteobacteria</taxon>
        <taxon>Hyphomicrobiales</taxon>
        <taxon>Rhizobiaceae</taxon>
        <taxon>Sinorhizobium/Ensifer group</taxon>
        <taxon>Sinorhizobium</taxon>
    </lineage>
</organism>
<comment type="function">
    <text evidence="1">Catalyzes the reversible aldol cleavage of N-acetylneuraminic acid (sialic acid; Neu5Ac) to form pyruvate and N-acetylmannosamine (ManNAc) via a Schiff base intermediate.</text>
</comment>
<comment type="catalytic activity">
    <reaction evidence="1">
        <text>aceneuramate = aldehydo-N-acetyl-D-mannosamine + pyruvate</text>
        <dbReference type="Rhea" id="RHEA:23296"/>
        <dbReference type="ChEBI" id="CHEBI:15361"/>
        <dbReference type="ChEBI" id="CHEBI:17122"/>
        <dbReference type="ChEBI" id="CHEBI:173083"/>
        <dbReference type="EC" id="4.1.3.3"/>
    </reaction>
</comment>
<comment type="pathway">
    <text evidence="1">Amino-sugar metabolism; N-acetylneuraminate degradation; D-fructose 6-phosphate from N-acetylneuraminate: step 1/5.</text>
</comment>
<comment type="subunit">
    <text evidence="1">Homotetramer.</text>
</comment>
<comment type="subcellular location">
    <subcellularLocation>
        <location evidence="1">Cytoplasm</location>
    </subcellularLocation>
</comment>
<comment type="similarity">
    <text evidence="1">Belongs to the DapA family. NanA subfamily.</text>
</comment>
<sequence length="299" mass="32380">MKLEGIYSALLTPFSEDESIDRQAIGALVDFQVRLGIDGVYVGGSSGEAMLQSLDERADYLSDVAAAASGRLTLIAHVGTIATRDALRLSQHAAKSGYQAISAIPPFYYDFSRPEVMAHYRELADVSALPLIVYNFPARTSGFTLPELVELLSHPNIIGIKHTSSDMFQLERIRHAVPDAIVYNGYDEMCLAGFAMGAQGAIGTTYNFMGDLFVALRDCAAAGRIEEARRLQAMANRVIQVLIKVGVMPGSKALLGIMGLPGGPSRRPFRKVEEADLAALREAVAPVLAWRESTSRKSM</sequence>
<protein>
    <recommendedName>
        <fullName evidence="1">N-acetylneuraminate lyase</fullName>
        <shortName evidence="1">NAL</shortName>
        <shortName evidence="1">Neu5Ac lyase</shortName>
        <ecNumber evidence="1">4.1.3.3</ecNumber>
    </recommendedName>
    <alternativeName>
        <fullName evidence="1">N-acetylneuraminate pyruvate-lyase</fullName>
    </alternativeName>
    <alternativeName>
        <fullName evidence="1">N-acetylneuraminic acid aldolase</fullName>
    </alternativeName>
    <alternativeName>
        <fullName evidence="1">Sialate lyase</fullName>
    </alternativeName>
    <alternativeName>
        <fullName evidence="1">Sialic acid aldolase</fullName>
    </alternativeName>
    <alternativeName>
        <fullName evidence="1">Sialic acid lyase</fullName>
    </alternativeName>
</protein>
<dbReference type="EC" id="4.1.3.3" evidence="1"/>
<dbReference type="EMBL" id="AL591985">
    <property type="protein sequence ID" value="CAC48689.1"/>
    <property type="molecule type" value="Genomic_DNA"/>
</dbReference>
<dbReference type="PIR" id="A95878">
    <property type="entry name" value="A95878"/>
</dbReference>
<dbReference type="RefSeq" id="NP_436829.1">
    <property type="nucleotide sequence ID" value="NC_003078.1"/>
</dbReference>
<dbReference type="RefSeq" id="WP_010975186.1">
    <property type="nucleotide sequence ID" value="NC_003078.1"/>
</dbReference>
<dbReference type="SMR" id="Q92WP0"/>
<dbReference type="EnsemblBacteria" id="CAC48689">
    <property type="protein sequence ID" value="CAC48689"/>
    <property type="gene ID" value="SM_b20299"/>
</dbReference>
<dbReference type="KEGG" id="sme:SM_b20299"/>
<dbReference type="PATRIC" id="fig|266834.11.peg.5214"/>
<dbReference type="eggNOG" id="COG0329">
    <property type="taxonomic scope" value="Bacteria"/>
</dbReference>
<dbReference type="HOGENOM" id="CLU_049343_6_0_5"/>
<dbReference type="OrthoDB" id="9778880at2"/>
<dbReference type="UniPathway" id="UPA00629">
    <property type="reaction ID" value="UER00680"/>
</dbReference>
<dbReference type="Proteomes" id="UP000001976">
    <property type="component" value="Plasmid pSymB"/>
</dbReference>
<dbReference type="GO" id="GO:0005829">
    <property type="term" value="C:cytosol"/>
    <property type="evidence" value="ECO:0007669"/>
    <property type="project" value="TreeGrafter"/>
</dbReference>
<dbReference type="GO" id="GO:0008747">
    <property type="term" value="F:N-acetylneuraminate lyase activity"/>
    <property type="evidence" value="ECO:0007669"/>
    <property type="project" value="UniProtKB-UniRule"/>
</dbReference>
<dbReference type="GO" id="GO:0005975">
    <property type="term" value="P:carbohydrate metabolic process"/>
    <property type="evidence" value="ECO:0007669"/>
    <property type="project" value="UniProtKB-UniRule"/>
</dbReference>
<dbReference type="GO" id="GO:0019262">
    <property type="term" value="P:N-acetylneuraminate catabolic process"/>
    <property type="evidence" value="ECO:0007669"/>
    <property type="project" value="UniProtKB-UniRule"/>
</dbReference>
<dbReference type="CDD" id="cd00954">
    <property type="entry name" value="NAL"/>
    <property type="match status" value="1"/>
</dbReference>
<dbReference type="Gene3D" id="3.20.20.70">
    <property type="entry name" value="Aldolase class I"/>
    <property type="match status" value="1"/>
</dbReference>
<dbReference type="HAMAP" id="MF_01237">
    <property type="entry name" value="N_acetylneuram_lyase"/>
    <property type="match status" value="1"/>
</dbReference>
<dbReference type="InterPro" id="IPR013785">
    <property type="entry name" value="Aldolase_TIM"/>
</dbReference>
<dbReference type="InterPro" id="IPR002220">
    <property type="entry name" value="DapA-like"/>
</dbReference>
<dbReference type="InterPro" id="IPR005264">
    <property type="entry name" value="NanA"/>
</dbReference>
<dbReference type="InterPro" id="IPR020625">
    <property type="entry name" value="Schiff_base-form_aldolases_AS"/>
</dbReference>
<dbReference type="NCBIfam" id="NF003164">
    <property type="entry name" value="PRK04147.1"/>
    <property type="match status" value="1"/>
</dbReference>
<dbReference type="PANTHER" id="PTHR42849">
    <property type="entry name" value="N-ACETYLNEURAMINATE LYASE"/>
    <property type="match status" value="1"/>
</dbReference>
<dbReference type="PANTHER" id="PTHR42849:SF1">
    <property type="entry name" value="N-ACETYLNEURAMINATE LYASE"/>
    <property type="match status" value="1"/>
</dbReference>
<dbReference type="Pfam" id="PF00701">
    <property type="entry name" value="DHDPS"/>
    <property type="match status" value="1"/>
</dbReference>
<dbReference type="PIRSF" id="PIRSF001365">
    <property type="entry name" value="DHDPS"/>
    <property type="match status" value="1"/>
</dbReference>
<dbReference type="PRINTS" id="PR00146">
    <property type="entry name" value="DHPICSNTHASE"/>
</dbReference>
<dbReference type="SMART" id="SM01130">
    <property type="entry name" value="DHDPS"/>
    <property type="match status" value="1"/>
</dbReference>
<dbReference type="SUPFAM" id="SSF51569">
    <property type="entry name" value="Aldolase"/>
    <property type="match status" value="1"/>
</dbReference>
<dbReference type="PROSITE" id="PS00666">
    <property type="entry name" value="DHDPS_2"/>
    <property type="match status" value="1"/>
</dbReference>
<gene>
    <name evidence="1" type="primary">nanA</name>
    <name type="ordered locus">RB0289</name>
    <name type="ORF">SMb20299</name>
</gene>
<feature type="chain" id="PRO_0000103217" description="N-acetylneuraminate lyase">
    <location>
        <begin position="1"/>
        <end position="299"/>
    </location>
</feature>
<feature type="active site" description="Proton donor" evidence="1">
    <location>
        <position position="134"/>
    </location>
</feature>
<feature type="active site" description="Schiff-base intermediate with substrate" evidence="1">
    <location>
        <position position="161"/>
    </location>
</feature>
<feature type="binding site" evidence="1">
    <location>
        <position position="45"/>
    </location>
    <ligand>
        <name>aceneuramate</name>
        <dbReference type="ChEBI" id="CHEBI:173083"/>
    </ligand>
</feature>
<feature type="binding site" evidence="1">
    <location>
        <position position="46"/>
    </location>
    <ligand>
        <name>aceneuramate</name>
        <dbReference type="ChEBI" id="CHEBI:173083"/>
    </ligand>
</feature>
<feature type="binding site" evidence="1">
    <location>
        <position position="163"/>
    </location>
    <ligand>
        <name>aceneuramate</name>
        <dbReference type="ChEBI" id="CHEBI:173083"/>
    </ligand>
</feature>
<feature type="binding site" evidence="1">
    <location>
        <position position="185"/>
    </location>
    <ligand>
        <name>aceneuramate</name>
        <dbReference type="ChEBI" id="CHEBI:173083"/>
    </ligand>
</feature>
<feature type="binding site" evidence="1">
    <location>
        <position position="187"/>
    </location>
    <ligand>
        <name>aceneuramate</name>
        <dbReference type="ChEBI" id="CHEBI:173083"/>
    </ligand>
</feature>
<feature type="binding site" evidence="1">
    <location>
        <position position="188"/>
    </location>
    <ligand>
        <name>aceneuramate</name>
        <dbReference type="ChEBI" id="CHEBI:173083"/>
    </ligand>
</feature>
<keyword id="KW-0119">Carbohydrate metabolism</keyword>
<keyword id="KW-0963">Cytoplasm</keyword>
<keyword id="KW-0456">Lyase</keyword>
<keyword id="KW-0614">Plasmid</keyword>
<keyword id="KW-1185">Reference proteome</keyword>
<keyword id="KW-0704">Schiff base</keyword>
<reference key="1">
    <citation type="journal article" date="2001" name="Proc. Natl. Acad. Sci. U.S.A.">
        <title>The complete sequence of the 1,683-kb pSymB megaplasmid from the N2-fixing endosymbiont Sinorhizobium meliloti.</title>
        <authorList>
            <person name="Finan T.M."/>
            <person name="Weidner S."/>
            <person name="Wong K."/>
            <person name="Buhrmester J."/>
            <person name="Chain P."/>
            <person name="Vorhoelter F.J."/>
            <person name="Hernandez-Lucas I."/>
            <person name="Becker A."/>
            <person name="Cowie A."/>
            <person name="Gouzy J."/>
            <person name="Golding B."/>
            <person name="Puehler A."/>
        </authorList>
    </citation>
    <scope>NUCLEOTIDE SEQUENCE [LARGE SCALE GENOMIC DNA]</scope>
    <source>
        <strain>1021</strain>
    </source>
</reference>
<reference key="2">
    <citation type="journal article" date="2001" name="Science">
        <title>The composite genome of the legume symbiont Sinorhizobium meliloti.</title>
        <authorList>
            <person name="Galibert F."/>
            <person name="Finan T.M."/>
            <person name="Long S.R."/>
            <person name="Puehler A."/>
            <person name="Abola P."/>
            <person name="Ampe F."/>
            <person name="Barloy-Hubler F."/>
            <person name="Barnett M.J."/>
            <person name="Becker A."/>
            <person name="Boistard P."/>
            <person name="Bothe G."/>
            <person name="Boutry M."/>
            <person name="Bowser L."/>
            <person name="Buhrmester J."/>
            <person name="Cadieu E."/>
            <person name="Capela D."/>
            <person name="Chain P."/>
            <person name="Cowie A."/>
            <person name="Davis R.W."/>
            <person name="Dreano S."/>
            <person name="Federspiel N.A."/>
            <person name="Fisher R.F."/>
            <person name="Gloux S."/>
            <person name="Godrie T."/>
            <person name="Goffeau A."/>
            <person name="Golding B."/>
            <person name="Gouzy J."/>
            <person name="Gurjal M."/>
            <person name="Hernandez-Lucas I."/>
            <person name="Hong A."/>
            <person name="Huizar L."/>
            <person name="Hyman R.W."/>
            <person name="Jones T."/>
            <person name="Kahn D."/>
            <person name="Kahn M.L."/>
            <person name="Kalman S."/>
            <person name="Keating D.H."/>
            <person name="Kiss E."/>
            <person name="Komp C."/>
            <person name="Lelaure V."/>
            <person name="Masuy D."/>
            <person name="Palm C."/>
            <person name="Peck M.C."/>
            <person name="Pohl T.M."/>
            <person name="Portetelle D."/>
            <person name="Purnelle B."/>
            <person name="Ramsperger U."/>
            <person name="Surzycki R."/>
            <person name="Thebault P."/>
            <person name="Vandenbol M."/>
            <person name="Vorhoelter F.J."/>
            <person name="Weidner S."/>
            <person name="Wells D.H."/>
            <person name="Wong K."/>
            <person name="Yeh K.-C."/>
            <person name="Batut J."/>
        </authorList>
    </citation>
    <scope>NUCLEOTIDE SEQUENCE [LARGE SCALE GENOMIC DNA]</scope>
    <source>
        <strain>1021</strain>
    </source>
</reference>
<name>NANA_RHIME</name>
<proteinExistence type="inferred from homology"/>
<evidence type="ECO:0000255" key="1">
    <source>
        <dbReference type="HAMAP-Rule" id="MF_01237"/>
    </source>
</evidence>
<geneLocation type="plasmid">
    <name>pSymB</name>
    <name>megaplasmid 2</name>
</geneLocation>
<accession>Q92WP0</accession>